<protein>
    <recommendedName>
        <fullName evidence="1">tRNA-specific 2-thiouridylase MnmA</fullName>
        <ecNumber evidence="1">2.8.1.13</ecNumber>
    </recommendedName>
</protein>
<organism>
    <name type="scientific">Xylella fastidiosa (strain Temecula1 / ATCC 700964)</name>
    <dbReference type="NCBI Taxonomy" id="183190"/>
    <lineage>
        <taxon>Bacteria</taxon>
        <taxon>Pseudomonadati</taxon>
        <taxon>Pseudomonadota</taxon>
        <taxon>Gammaproteobacteria</taxon>
        <taxon>Lysobacterales</taxon>
        <taxon>Lysobacteraceae</taxon>
        <taxon>Xylella</taxon>
    </lineage>
</organism>
<dbReference type="EC" id="2.8.1.13" evidence="1"/>
<dbReference type="EMBL" id="AE009442">
    <property type="protein sequence ID" value="AAO28533.1"/>
    <property type="molecule type" value="Genomic_DNA"/>
</dbReference>
<dbReference type="RefSeq" id="WP_011097736.1">
    <property type="nucleotide sequence ID" value="NC_004556.1"/>
</dbReference>
<dbReference type="SMR" id="Q87DM0"/>
<dbReference type="GeneID" id="93904440"/>
<dbReference type="KEGG" id="xft:PD_0662"/>
<dbReference type="HOGENOM" id="CLU_035188_1_0_6"/>
<dbReference type="Proteomes" id="UP000002516">
    <property type="component" value="Chromosome"/>
</dbReference>
<dbReference type="GO" id="GO:0005737">
    <property type="term" value="C:cytoplasm"/>
    <property type="evidence" value="ECO:0007669"/>
    <property type="project" value="UniProtKB-SubCell"/>
</dbReference>
<dbReference type="GO" id="GO:0005524">
    <property type="term" value="F:ATP binding"/>
    <property type="evidence" value="ECO:0007669"/>
    <property type="project" value="UniProtKB-KW"/>
</dbReference>
<dbReference type="GO" id="GO:0000049">
    <property type="term" value="F:tRNA binding"/>
    <property type="evidence" value="ECO:0007669"/>
    <property type="project" value="UniProtKB-KW"/>
</dbReference>
<dbReference type="GO" id="GO:0103016">
    <property type="term" value="F:tRNA-uridine 2-sulfurtransferase activity"/>
    <property type="evidence" value="ECO:0007669"/>
    <property type="project" value="UniProtKB-EC"/>
</dbReference>
<dbReference type="GO" id="GO:0002143">
    <property type="term" value="P:tRNA wobble position uridine thiolation"/>
    <property type="evidence" value="ECO:0007669"/>
    <property type="project" value="TreeGrafter"/>
</dbReference>
<dbReference type="CDD" id="cd01998">
    <property type="entry name" value="MnmA_TRMU-like"/>
    <property type="match status" value="1"/>
</dbReference>
<dbReference type="FunFam" id="2.30.30.280:FF:000001">
    <property type="entry name" value="tRNA-specific 2-thiouridylase MnmA"/>
    <property type="match status" value="1"/>
</dbReference>
<dbReference type="FunFam" id="2.40.30.10:FF:000023">
    <property type="entry name" value="tRNA-specific 2-thiouridylase MnmA"/>
    <property type="match status" value="1"/>
</dbReference>
<dbReference type="FunFam" id="3.40.50.620:FF:000004">
    <property type="entry name" value="tRNA-specific 2-thiouridylase MnmA"/>
    <property type="match status" value="1"/>
</dbReference>
<dbReference type="Gene3D" id="2.30.30.280">
    <property type="entry name" value="Adenine nucleotide alpha hydrolases-like domains"/>
    <property type="match status" value="1"/>
</dbReference>
<dbReference type="Gene3D" id="3.40.50.620">
    <property type="entry name" value="HUPs"/>
    <property type="match status" value="1"/>
</dbReference>
<dbReference type="Gene3D" id="2.40.30.10">
    <property type="entry name" value="Translation factors"/>
    <property type="match status" value="1"/>
</dbReference>
<dbReference type="HAMAP" id="MF_00144">
    <property type="entry name" value="tRNA_thiouridyl_MnmA"/>
    <property type="match status" value="1"/>
</dbReference>
<dbReference type="InterPro" id="IPR004506">
    <property type="entry name" value="MnmA-like"/>
</dbReference>
<dbReference type="InterPro" id="IPR046885">
    <property type="entry name" value="MnmA-like_C"/>
</dbReference>
<dbReference type="InterPro" id="IPR046884">
    <property type="entry name" value="MnmA-like_central"/>
</dbReference>
<dbReference type="InterPro" id="IPR023382">
    <property type="entry name" value="MnmA-like_central_sf"/>
</dbReference>
<dbReference type="InterPro" id="IPR014729">
    <property type="entry name" value="Rossmann-like_a/b/a_fold"/>
</dbReference>
<dbReference type="NCBIfam" id="NF001138">
    <property type="entry name" value="PRK00143.1"/>
    <property type="match status" value="1"/>
</dbReference>
<dbReference type="NCBIfam" id="TIGR00420">
    <property type="entry name" value="trmU"/>
    <property type="match status" value="1"/>
</dbReference>
<dbReference type="PANTHER" id="PTHR11933:SF5">
    <property type="entry name" value="MITOCHONDRIAL TRNA-SPECIFIC 2-THIOURIDYLASE 1"/>
    <property type="match status" value="1"/>
</dbReference>
<dbReference type="PANTHER" id="PTHR11933">
    <property type="entry name" value="TRNA 5-METHYLAMINOMETHYL-2-THIOURIDYLATE -METHYLTRANSFERASE"/>
    <property type="match status" value="1"/>
</dbReference>
<dbReference type="Pfam" id="PF03054">
    <property type="entry name" value="tRNA_Me_trans"/>
    <property type="match status" value="1"/>
</dbReference>
<dbReference type="Pfam" id="PF20258">
    <property type="entry name" value="tRNA_Me_trans_C"/>
    <property type="match status" value="1"/>
</dbReference>
<dbReference type="Pfam" id="PF20259">
    <property type="entry name" value="tRNA_Me_trans_M"/>
    <property type="match status" value="1"/>
</dbReference>
<dbReference type="SUPFAM" id="SSF52402">
    <property type="entry name" value="Adenine nucleotide alpha hydrolases-like"/>
    <property type="match status" value="1"/>
</dbReference>
<evidence type="ECO:0000255" key="1">
    <source>
        <dbReference type="HAMAP-Rule" id="MF_00144"/>
    </source>
</evidence>
<sequence>MNTPRIIVAMSGGVDSSVAAWRLNSQREAIAGLFMRNWTDDGNGQCHAEEDRRDAVAVCGILGIAFHFRDFSHEYWQEVFTHFLAEYANGRTPNPDVLCNREIKFKHFLETARELGADRIATGHYARIEHYRQRWHLLRGADRSKDQSYFLHQLGQEQLAATLFPIGDLEKQQLRQLAHQTGLPTHAKKDSTGICFIGERNFREFLKQYLPAQPGEIRDPQEQRIAEHPGVFYFTLGQRQGLNIGGVRNRPPSPWYVIGKDLATNVLYVDQHRDSPFLQSRWLRSEPAHWVSGSPPAPTFTCTAQTRYRQADEPCKVTVRNDGSLDVDFTRTQWAVTPGQSLVLYDGNECLGGAVIATTDAPLERKRARNLSKTENVLQ</sequence>
<name>MNMA_XYLFT</name>
<feature type="chain" id="PRO_0000121706" description="tRNA-specific 2-thiouridylase MnmA">
    <location>
        <begin position="1"/>
        <end position="379"/>
    </location>
</feature>
<feature type="region of interest" description="Interaction with target base in tRNA" evidence="1">
    <location>
        <begin position="94"/>
        <end position="96"/>
    </location>
</feature>
<feature type="region of interest" description="Interaction with tRNA" evidence="1">
    <location>
        <begin position="145"/>
        <end position="147"/>
    </location>
</feature>
<feature type="region of interest" description="Interaction with tRNA" evidence="1">
    <location>
        <begin position="307"/>
        <end position="308"/>
    </location>
</feature>
<feature type="active site" description="Nucleophile" evidence="1">
    <location>
        <position position="99"/>
    </location>
</feature>
<feature type="active site" description="Cysteine persulfide intermediate" evidence="1">
    <location>
        <position position="195"/>
    </location>
</feature>
<feature type="binding site" evidence="1">
    <location>
        <begin position="9"/>
        <end position="16"/>
    </location>
    <ligand>
        <name>ATP</name>
        <dbReference type="ChEBI" id="CHEBI:30616"/>
    </ligand>
</feature>
<feature type="binding site" evidence="1">
    <location>
        <position position="35"/>
    </location>
    <ligand>
        <name>ATP</name>
        <dbReference type="ChEBI" id="CHEBI:30616"/>
    </ligand>
</feature>
<feature type="binding site" evidence="1">
    <location>
        <position position="123"/>
    </location>
    <ligand>
        <name>ATP</name>
        <dbReference type="ChEBI" id="CHEBI:30616"/>
    </ligand>
</feature>
<feature type="site" description="Interaction with tRNA" evidence="1">
    <location>
        <position position="124"/>
    </location>
</feature>
<feature type="site" description="Interaction with tRNA" evidence="1">
    <location>
        <position position="340"/>
    </location>
</feature>
<feature type="disulfide bond" description="Alternate" evidence="1">
    <location>
        <begin position="99"/>
        <end position="195"/>
    </location>
</feature>
<gene>
    <name evidence="1" type="primary">mnmA</name>
    <name type="synonym">trmU</name>
    <name type="ordered locus">PD_0662</name>
</gene>
<keyword id="KW-0067">ATP-binding</keyword>
<keyword id="KW-0963">Cytoplasm</keyword>
<keyword id="KW-1015">Disulfide bond</keyword>
<keyword id="KW-0547">Nucleotide-binding</keyword>
<keyword id="KW-1185">Reference proteome</keyword>
<keyword id="KW-0694">RNA-binding</keyword>
<keyword id="KW-0808">Transferase</keyword>
<keyword id="KW-0819">tRNA processing</keyword>
<keyword id="KW-0820">tRNA-binding</keyword>
<comment type="function">
    <text evidence="1">Catalyzes the 2-thiolation of uridine at the wobble position (U34) of tRNA, leading to the formation of s(2)U34.</text>
</comment>
<comment type="catalytic activity">
    <reaction evidence="1">
        <text>S-sulfanyl-L-cysteinyl-[protein] + uridine(34) in tRNA + AH2 + ATP = 2-thiouridine(34) in tRNA + L-cysteinyl-[protein] + A + AMP + diphosphate + H(+)</text>
        <dbReference type="Rhea" id="RHEA:47032"/>
        <dbReference type="Rhea" id="RHEA-COMP:10131"/>
        <dbReference type="Rhea" id="RHEA-COMP:11726"/>
        <dbReference type="Rhea" id="RHEA-COMP:11727"/>
        <dbReference type="Rhea" id="RHEA-COMP:11728"/>
        <dbReference type="ChEBI" id="CHEBI:13193"/>
        <dbReference type="ChEBI" id="CHEBI:15378"/>
        <dbReference type="ChEBI" id="CHEBI:17499"/>
        <dbReference type="ChEBI" id="CHEBI:29950"/>
        <dbReference type="ChEBI" id="CHEBI:30616"/>
        <dbReference type="ChEBI" id="CHEBI:33019"/>
        <dbReference type="ChEBI" id="CHEBI:61963"/>
        <dbReference type="ChEBI" id="CHEBI:65315"/>
        <dbReference type="ChEBI" id="CHEBI:87170"/>
        <dbReference type="ChEBI" id="CHEBI:456215"/>
        <dbReference type="EC" id="2.8.1.13"/>
    </reaction>
</comment>
<comment type="subcellular location">
    <subcellularLocation>
        <location evidence="1">Cytoplasm</location>
    </subcellularLocation>
</comment>
<comment type="similarity">
    <text evidence="1">Belongs to the MnmA/TRMU family.</text>
</comment>
<reference key="1">
    <citation type="journal article" date="2003" name="J. Bacteriol.">
        <title>Comparative analyses of the complete genome sequences of Pierce's disease and citrus variegated chlorosis strains of Xylella fastidiosa.</title>
        <authorList>
            <person name="Van Sluys M.A."/>
            <person name="de Oliveira M.C."/>
            <person name="Monteiro-Vitorello C.B."/>
            <person name="Miyaki C.Y."/>
            <person name="Furlan L.R."/>
            <person name="Camargo L.E.A."/>
            <person name="da Silva A.C.R."/>
            <person name="Moon D.H."/>
            <person name="Takita M.A."/>
            <person name="Lemos E.G.M."/>
            <person name="Machado M.A."/>
            <person name="Ferro M.I.T."/>
            <person name="da Silva F.R."/>
            <person name="Goldman M.H.S."/>
            <person name="Goldman G.H."/>
            <person name="Lemos M.V.F."/>
            <person name="El-Dorry H."/>
            <person name="Tsai S.M."/>
            <person name="Carrer H."/>
            <person name="Carraro D.M."/>
            <person name="de Oliveira R.C."/>
            <person name="Nunes L.R."/>
            <person name="Siqueira W.J."/>
            <person name="Coutinho L.L."/>
            <person name="Kimura E.T."/>
            <person name="Ferro E.S."/>
            <person name="Harakava R."/>
            <person name="Kuramae E.E."/>
            <person name="Marino C.L."/>
            <person name="Giglioti E."/>
            <person name="Abreu I.L."/>
            <person name="Alves L.M.C."/>
            <person name="do Amaral A.M."/>
            <person name="Baia G.S."/>
            <person name="Blanco S.R."/>
            <person name="Brito M.S."/>
            <person name="Cannavan F.S."/>
            <person name="Celestino A.V."/>
            <person name="da Cunha A.F."/>
            <person name="Fenille R.C."/>
            <person name="Ferro J.A."/>
            <person name="Formighieri E.F."/>
            <person name="Kishi L.T."/>
            <person name="Leoni S.G."/>
            <person name="Oliveira A.R."/>
            <person name="Rosa V.E. Jr."/>
            <person name="Sassaki F.T."/>
            <person name="Sena J.A.D."/>
            <person name="de Souza A.A."/>
            <person name="Truffi D."/>
            <person name="Tsukumo F."/>
            <person name="Yanai G.M."/>
            <person name="Zaros L.G."/>
            <person name="Civerolo E.L."/>
            <person name="Simpson A.J.G."/>
            <person name="Almeida N.F. Jr."/>
            <person name="Setubal J.C."/>
            <person name="Kitajima J.P."/>
        </authorList>
    </citation>
    <scope>NUCLEOTIDE SEQUENCE [LARGE SCALE GENOMIC DNA]</scope>
    <source>
        <strain>Temecula1 / ATCC 700964</strain>
    </source>
</reference>
<accession>Q87DM0</accession>
<proteinExistence type="inferred from homology"/>